<protein>
    <recommendedName>
        <fullName evidence="1">Phosphoenolpyruvate carboxylase</fullName>
        <shortName evidence="1">PEPC</shortName>
        <shortName evidence="1">PEPCase</shortName>
        <ecNumber evidence="1">4.1.1.31</ecNumber>
    </recommendedName>
</protein>
<name>CAPP_SALPC</name>
<accession>C0Q472</accession>
<proteinExistence type="inferred from homology"/>
<sequence>MNEQYSALRSNVSMLGKVLGETIKDALGEHILDRVETIRKLSKSSRAGNEANRQELLTTLQNLSNDELLPVARAFSQFLNLANTAEQYHSISPKGEAASNPEVIARTLRKLKNQPDLNDATIKKAVESLSLELVLTAHPTEITRRTLIHKMGEINNCLKQLDNTDIADYERHQVMRRLRQLIAQSWHTDEIRKQRPSPVDEAKWGFAVVENSLWQGVPNYLRELNEQLEENLGYKLPVDFVPVRFTSWMGGDRDGNPNVTADITRHVLLLSRWKATDLFLKDIHVLVSELSMVDATPELLALVGEEGASEPYRYLMKKLRARLMATQSWLEARLKGEKLPKPAGLLTQNEQLWEPLYACYQSLQACGMGIIANGELLDTLRRVKCFGVPLVRIDIRQESTRHTEALGEITRYLGIGDYESWSEADKQAFLIRELNSKRPLLPRNWEPSNDTREVLETCKVIAEAPKGSIAAYVISMAKTPSDVLAVHLLLKEAGIGFAMPVAPLFETLDDLNNADDVMTQLLNIDWYRGLIQGKQMVMIGYSDSAKDAGVMAASWAQYQAQDALIKTCEKAGIELTLFHGRGGSIGRGGAPAHAALLSQPPGSLKGGLRVTEQGEMIRFKYGLPEVTVSSLSLYTSAILEANLLPPPEPKDSWRHIMDELSVISCETYRGYVRENKDFVPYFRSATPEQELGKLPLGSRPAKRRPTGGVESLRAIPWIFAWTQNRLMLPAWLGAGTALQKVVEDGKQSELEAMCRDWPFFSTRLGMLEMVFSKADLWLADYYDQRLVAKTLWPLGKELRDLLEEDIKVVLAIANDSHLMADLPWIAESIQLRNVYTDPLNVLQAELLYRSRLTEEQGKSPDPRVEQALMVTIAGVAAGMRNTG</sequence>
<evidence type="ECO:0000255" key="1">
    <source>
        <dbReference type="HAMAP-Rule" id="MF_00595"/>
    </source>
</evidence>
<keyword id="KW-0120">Carbon dioxide fixation</keyword>
<keyword id="KW-0456">Lyase</keyword>
<keyword id="KW-0460">Magnesium</keyword>
<organism>
    <name type="scientific">Salmonella paratyphi C (strain RKS4594)</name>
    <dbReference type="NCBI Taxonomy" id="476213"/>
    <lineage>
        <taxon>Bacteria</taxon>
        <taxon>Pseudomonadati</taxon>
        <taxon>Pseudomonadota</taxon>
        <taxon>Gammaproteobacteria</taxon>
        <taxon>Enterobacterales</taxon>
        <taxon>Enterobacteriaceae</taxon>
        <taxon>Salmonella</taxon>
    </lineage>
</organism>
<comment type="function">
    <text evidence="1">Forms oxaloacetate, a four-carbon dicarboxylic acid source for the tricarboxylic acid cycle.</text>
</comment>
<comment type="catalytic activity">
    <reaction evidence="1">
        <text>oxaloacetate + phosphate = phosphoenolpyruvate + hydrogencarbonate</text>
        <dbReference type="Rhea" id="RHEA:28370"/>
        <dbReference type="ChEBI" id="CHEBI:16452"/>
        <dbReference type="ChEBI" id="CHEBI:17544"/>
        <dbReference type="ChEBI" id="CHEBI:43474"/>
        <dbReference type="ChEBI" id="CHEBI:58702"/>
        <dbReference type="EC" id="4.1.1.31"/>
    </reaction>
</comment>
<comment type="cofactor">
    <cofactor evidence="1">
        <name>Mg(2+)</name>
        <dbReference type="ChEBI" id="CHEBI:18420"/>
    </cofactor>
</comment>
<comment type="similarity">
    <text evidence="1">Belongs to the PEPCase type 1 family.</text>
</comment>
<reference key="1">
    <citation type="journal article" date="2009" name="PLoS ONE">
        <title>Salmonella paratyphi C: genetic divergence from Salmonella choleraesuis and pathogenic convergence with Salmonella typhi.</title>
        <authorList>
            <person name="Liu W.-Q."/>
            <person name="Feng Y."/>
            <person name="Wang Y."/>
            <person name="Zou Q.-H."/>
            <person name="Chen F."/>
            <person name="Guo J.-T."/>
            <person name="Peng Y.-H."/>
            <person name="Jin Y."/>
            <person name="Li Y.-G."/>
            <person name="Hu S.-N."/>
            <person name="Johnston R.N."/>
            <person name="Liu G.-R."/>
            <person name="Liu S.-L."/>
        </authorList>
    </citation>
    <scope>NUCLEOTIDE SEQUENCE [LARGE SCALE GENOMIC DNA]</scope>
    <source>
        <strain>RKS4594</strain>
    </source>
</reference>
<feature type="chain" id="PRO_1000146981" description="Phosphoenolpyruvate carboxylase">
    <location>
        <begin position="1"/>
        <end position="883"/>
    </location>
</feature>
<feature type="active site" evidence="1">
    <location>
        <position position="138"/>
    </location>
</feature>
<feature type="active site" evidence="1">
    <location>
        <position position="546"/>
    </location>
</feature>
<dbReference type="EC" id="4.1.1.31" evidence="1"/>
<dbReference type="EMBL" id="CP000857">
    <property type="protein sequence ID" value="ACN48291.1"/>
    <property type="molecule type" value="Genomic_DNA"/>
</dbReference>
<dbReference type="RefSeq" id="WP_001005548.1">
    <property type="nucleotide sequence ID" value="NC_012125.1"/>
</dbReference>
<dbReference type="SMR" id="C0Q472"/>
<dbReference type="KEGG" id="sei:SPC_4228"/>
<dbReference type="HOGENOM" id="CLU_006557_2_0_6"/>
<dbReference type="Proteomes" id="UP000001599">
    <property type="component" value="Chromosome"/>
</dbReference>
<dbReference type="GO" id="GO:0005829">
    <property type="term" value="C:cytosol"/>
    <property type="evidence" value="ECO:0007669"/>
    <property type="project" value="TreeGrafter"/>
</dbReference>
<dbReference type="GO" id="GO:0000287">
    <property type="term" value="F:magnesium ion binding"/>
    <property type="evidence" value="ECO:0007669"/>
    <property type="project" value="UniProtKB-UniRule"/>
</dbReference>
<dbReference type="GO" id="GO:0008964">
    <property type="term" value="F:phosphoenolpyruvate carboxylase activity"/>
    <property type="evidence" value="ECO:0007669"/>
    <property type="project" value="UniProtKB-UniRule"/>
</dbReference>
<dbReference type="GO" id="GO:0015977">
    <property type="term" value="P:carbon fixation"/>
    <property type="evidence" value="ECO:0007669"/>
    <property type="project" value="UniProtKB-UniRule"/>
</dbReference>
<dbReference type="GO" id="GO:0006107">
    <property type="term" value="P:oxaloacetate metabolic process"/>
    <property type="evidence" value="ECO:0007669"/>
    <property type="project" value="UniProtKB-UniRule"/>
</dbReference>
<dbReference type="GO" id="GO:0006099">
    <property type="term" value="P:tricarboxylic acid cycle"/>
    <property type="evidence" value="ECO:0007669"/>
    <property type="project" value="InterPro"/>
</dbReference>
<dbReference type="FunFam" id="1.20.1440.90:FF:000002">
    <property type="entry name" value="Phosphoenolpyruvate carboxylase"/>
    <property type="match status" value="1"/>
</dbReference>
<dbReference type="Gene3D" id="1.20.1440.90">
    <property type="entry name" value="Phosphoenolpyruvate/pyruvate domain"/>
    <property type="match status" value="1"/>
</dbReference>
<dbReference type="HAMAP" id="MF_00595">
    <property type="entry name" value="PEPcase_type1"/>
    <property type="match status" value="1"/>
</dbReference>
<dbReference type="InterPro" id="IPR021135">
    <property type="entry name" value="PEP_COase"/>
</dbReference>
<dbReference type="InterPro" id="IPR022805">
    <property type="entry name" value="PEP_COase_bac/pln-type"/>
</dbReference>
<dbReference type="InterPro" id="IPR018129">
    <property type="entry name" value="PEP_COase_Lys_AS"/>
</dbReference>
<dbReference type="InterPro" id="IPR033129">
    <property type="entry name" value="PEPCASE_His_AS"/>
</dbReference>
<dbReference type="InterPro" id="IPR015813">
    <property type="entry name" value="Pyrv/PenolPyrv_kinase-like_dom"/>
</dbReference>
<dbReference type="NCBIfam" id="NF000584">
    <property type="entry name" value="PRK00009.1"/>
    <property type="match status" value="1"/>
</dbReference>
<dbReference type="PANTHER" id="PTHR30523">
    <property type="entry name" value="PHOSPHOENOLPYRUVATE CARBOXYLASE"/>
    <property type="match status" value="1"/>
</dbReference>
<dbReference type="PANTHER" id="PTHR30523:SF6">
    <property type="entry name" value="PHOSPHOENOLPYRUVATE CARBOXYLASE"/>
    <property type="match status" value="1"/>
</dbReference>
<dbReference type="Pfam" id="PF00311">
    <property type="entry name" value="PEPcase"/>
    <property type="match status" value="1"/>
</dbReference>
<dbReference type="PRINTS" id="PR00150">
    <property type="entry name" value="PEPCARBXLASE"/>
</dbReference>
<dbReference type="SUPFAM" id="SSF51621">
    <property type="entry name" value="Phosphoenolpyruvate/pyruvate domain"/>
    <property type="match status" value="1"/>
</dbReference>
<dbReference type="PROSITE" id="PS00781">
    <property type="entry name" value="PEPCASE_1"/>
    <property type="match status" value="1"/>
</dbReference>
<dbReference type="PROSITE" id="PS00393">
    <property type="entry name" value="PEPCASE_2"/>
    <property type="match status" value="1"/>
</dbReference>
<gene>
    <name evidence="1" type="primary">ppc</name>
    <name type="ordered locus">SPC_4228</name>
</gene>